<protein>
    <recommendedName>
        <fullName evidence="1">Large ribosomal subunit protein uL22</fullName>
    </recommendedName>
    <alternativeName>
        <fullName evidence="2">50S ribosomal protein L22</fullName>
    </alternativeName>
</protein>
<keyword id="KW-0687">Ribonucleoprotein</keyword>
<keyword id="KW-0689">Ribosomal protein</keyword>
<keyword id="KW-0694">RNA-binding</keyword>
<keyword id="KW-0699">rRNA-binding</keyword>
<feature type="chain" id="PRO_1000142249" description="Large ribosomal subunit protein uL22">
    <location>
        <begin position="1"/>
        <end position="109"/>
    </location>
</feature>
<reference key="1">
    <citation type="journal article" date="2008" name="Genome Res.">
        <title>Genome sequence of the beta-rhizobium Cupriavidus taiwanensis and comparative genomics of rhizobia.</title>
        <authorList>
            <person name="Amadou C."/>
            <person name="Pascal G."/>
            <person name="Mangenot S."/>
            <person name="Glew M."/>
            <person name="Bontemps C."/>
            <person name="Capela D."/>
            <person name="Carrere S."/>
            <person name="Cruveiller S."/>
            <person name="Dossat C."/>
            <person name="Lajus A."/>
            <person name="Marchetti M."/>
            <person name="Poinsot V."/>
            <person name="Rouy Z."/>
            <person name="Servin B."/>
            <person name="Saad M."/>
            <person name="Schenowitz C."/>
            <person name="Barbe V."/>
            <person name="Batut J."/>
            <person name="Medigue C."/>
            <person name="Masson-Boivin C."/>
        </authorList>
    </citation>
    <scope>NUCLEOTIDE SEQUENCE [LARGE SCALE GENOMIC DNA]</scope>
    <source>
        <strain>DSM 17343 / BCRC 17206 / CCUG 44338 / CIP 107171 / LMG 19424 / R1</strain>
    </source>
</reference>
<sequence length="109" mass="11932">MEVKAIHRGARISAQKTRLVADQIRGLPIERALNVLTFSPKKAAGIVKKVVESAIANAEHNEGADIDELKVKSIYVDKATSLKRFTARAKGRGNRIEKQTCHITVTLGN</sequence>
<gene>
    <name evidence="1" type="primary">rplV</name>
    <name type="ordered locus">RALTA_A2939</name>
</gene>
<dbReference type="EMBL" id="CU633749">
    <property type="protein sequence ID" value="CAQ70863.1"/>
    <property type="molecule type" value="Genomic_DNA"/>
</dbReference>
<dbReference type="RefSeq" id="WP_003271370.1">
    <property type="nucleotide sequence ID" value="NC_010528.1"/>
</dbReference>
<dbReference type="SMR" id="B3R7R8"/>
<dbReference type="GeneID" id="34789878"/>
<dbReference type="KEGG" id="cti:RALTA_A2939"/>
<dbReference type="eggNOG" id="COG0091">
    <property type="taxonomic scope" value="Bacteria"/>
</dbReference>
<dbReference type="HOGENOM" id="CLU_083987_3_3_4"/>
<dbReference type="BioCyc" id="CTAI977880:RALTA_RS14330-MONOMER"/>
<dbReference type="Proteomes" id="UP000001692">
    <property type="component" value="Chromosome 1"/>
</dbReference>
<dbReference type="GO" id="GO:0022625">
    <property type="term" value="C:cytosolic large ribosomal subunit"/>
    <property type="evidence" value="ECO:0007669"/>
    <property type="project" value="TreeGrafter"/>
</dbReference>
<dbReference type="GO" id="GO:0019843">
    <property type="term" value="F:rRNA binding"/>
    <property type="evidence" value="ECO:0007669"/>
    <property type="project" value="UniProtKB-UniRule"/>
</dbReference>
<dbReference type="GO" id="GO:0003735">
    <property type="term" value="F:structural constituent of ribosome"/>
    <property type="evidence" value="ECO:0007669"/>
    <property type="project" value="InterPro"/>
</dbReference>
<dbReference type="GO" id="GO:0006412">
    <property type="term" value="P:translation"/>
    <property type="evidence" value="ECO:0007669"/>
    <property type="project" value="UniProtKB-UniRule"/>
</dbReference>
<dbReference type="CDD" id="cd00336">
    <property type="entry name" value="Ribosomal_L22"/>
    <property type="match status" value="1"/>
</dbReference>
<dbReference type="FunFam" id="3.90.470.10:FF:000001">
    <property type="entry name" value="50S ribosomal protein L22"/>
    <property type="match status" value="1"/>
</dbReference>
<dbReference type="Gene3D" id="3.90.470.10">
    <property type="entry name" value="Ribosomal protein L22/L17"/>
    <property type="match status" value="1"/>
</dbReference>
<dbReference type="HAMAP" id="MF_01331_B">
    <property type="entry name" value="Ribosomal_uL22_B"/>
    <property type="match status" value="1"/>
</dbReference>
<dbReference type="InterPro" id="IPR001063">
    <property type="entry name" value="Ribosomal_uL22"/>
</dbReference>
<dbReference type="InterPro" id="IPR005727">
    <property type="entry name" value="Ribosomal_uL22_bac/chlpt-type"/>
</dbReference>
<dbReference type="InterPro" id="IPR047867">
    <property type="entry name" value="Ribosomal_uL22_bac/org-type"/>
</dbReference>
<dbReference type="InterPro" id="IPR018260">
    <property type="entry name" value="Ribosomal_uL22_CS"/>
</dbReference>
<dbReference type="InterPro" id="IPR036394">
    <property type="entry name" value="Ribosomal_uL22_sf"/>
</dbReference>
<dbReference type="NCBIfam" id="TIGR01044">
    <property type="entry name" value="rplV_bact"/>
    <property type="match status" value="1"/>
</dbReference>
<dbReference type="PANTHER" id="PTHR13501">
    <property type="entry name" value="CHLOROPLAST 50S RIBOSOMAL PROTEIN L22-RELATED"/>
    <property type="match status" value="1"/>
</dbReference>
<dbReference type="PANTHER" id="PTHR13501:SF8">
    <property type="entry name" value="LARGE RIBOSOMAL SUBUNIT PROTEIN UL22M"/>
    <property type="match status" value="1"/>
</dbReference>
<dbReference type="Pfam" id="PF00237">
    <property type="entry name" value="Ribosomal_L22"/>
    <property type="match status" value="1"/>
</dbReference>
<dbReference type="SUPFAM" id="SSF54843">
    <property type="entry name" value="Ribosomal protein L22"/>
    <property type="match status" value="1"/>
</dbReference>
<dbReference type="PROSITE" id="PS00464">
    <property type="entry name" value="RIBOSOMAL_L22"/>
    <property type="match status" value="1"/>
</dbReference>
<proteinExistence type="inferred from homology"/>
<evidence type="ECO:0000255" key="1">
    <source>
        <dbReference type="HAMAP-Rule" id="MF_01331"/>
    </source>
</evidence>
<evidence type="ECO:0000305" key="2"/>
<accession>B3R7R8</accession>
<comment type="function">
    <text evidence="1">This protein binds specifically to 23S rRNA; its binding is stimulated by other ribosomal proteins, e.g. L4, L17, and L20. It is important during the early stages of 50S assembly. It makes multiple contacts with different domains of the 23S rRNA in the assembled 50S subunit and ribosome (By similarity).</text>
</comment>
<comment type="function">
    <text evidence="1">The globular domain of the protein is located near the polypeptide exit tunnel on the outside of the subunit, while an extended beta-hairpin is found that lines the wall of the exit tunnel in the center of the 70S ribosome.</text>
</comment>
<comment type="subunit">
    <text evidence="1">Part of the 50S ribosomal subunit.</text>
</comment>
<comment type="similarity">
    <text evidence="1">Belongs to the universal ribosomal protein uL22 family.</text>
</comment>
<organism>
    <name type="scientific">Cupriavidus taiwanensis (strain DSM 17343 / BCRC 17206 / CCUG 44338 / CIP 107171 / LMG 19424 / R1)</name>
    <name type="common">Ralstonia taiwanensis (strain LMG 19424)</name>
    <dbReference type="NCBI Taxonomy" id="977880"/>
    <lineage>
        <taxon>Bacteria</taxon>
        <taxon>Pseudomonadati</taxon>
        <taxon>Pseudomonadota</taxon>
        <taxon>Betaproteobacteria</taxon>
        <taxon>Burkholderiales</taxon>
        <taxon>Burkholderiaceae</taxon>
        <taxon>Cupriavidus</taxon>
    </lineage>
</organism>
<name>RL22_CUPTR</name>